<feature type="signal peptide" evidence="2">
    <location>
        <begin position="1"/>
        <end position="16"/>
    </location>
</feature>
<feature type="chain" id="PRO_0000004255" description="Putative carbonic anhydrase-like protein 2">
    <location>
        <begin position="17"/>
        <end position="337"/>
    </location>
</feature>
<feature type="domain" description="Alpha-carbonic anhydrase" evidence="3">
    <location>
        <begin position="17"/>
        <end position="274"/>
    </location>
</feature>
<feature type="active site" evidence="1">
    <location>
        <position position="140"/>
    </location>
</feature>
<feature type="binding site" evidence="1">
    <location>
        <begin position="212"/>
        <end position="213"/>
    </location>
    <ligand>
        <name>substrate</name>
    </ligand>
</feature>
<feature type="glycosylation site" description="N-linked (GlcNAc...) asparagine" evidence="4">
    <location>
        <position position="188"/>
    </location>
</feature>
<evidence type="ECO:0000250" key="1"/>
<evidence type="ECO:0000255" key="2"/>
<evidence type="ECO:0000255" key="3">
    <source>
        <dbReference type="PROSITE-ProRule" id="PRU01134"/>
    </source>
</evidence>
<evidence type="ECO:0000269" key="4">
    <source>
    </source>
</evidence>
<evidence type="ECO:0000305" key="5"/>
<protein>
    <recommendedName>
        <fullName>Putative carbonic anhydrase-like protein 2</fullName>
    </recommendedName>
</protein>
<organism>
    <name type="scientific">Caenorhabditis elegans</name>
    <dbReference type="NCBI Taxonomy" id="6239"/>
    <lineage>
        <taxon>Eukaryota</taxon>
        <taxon>Metazoa</taxon>
        <taxon>Ecdysozoa</taxon>
        <taxon>Nematoda</taxon>
        <taxon>Chromadorea</taxon>
        <taxon>Rhabditida</taxon>
        <taxon>Rhabditina</taxon>
        <taxon>Rhabditomorpha</taxon>
        <taxon>Rhabditoidea</taxon>
        <taxon>Rhabditidae</taxon>
        <taxon>Peloderinae</taxon>
        <taxon>Caenorhabditis</taxon>
    </lineage>
</organism>
<dbReference type="EMBL" id="FO080995">
    <property type="protein sequence ID" value="CCD68342.1"/>
    <property type="molecule type" value="Genomic_DNA"/>
</dbReference>
<dbReference type="PIR" id="T34196">
    <property type="entry name" value="T34196"/>
</dbReference>
<dbReference type="RefSeq" id="NP_495567.3">
    <property type="nucleotide sequence ID" value="NM_063166.6"/>
</dbReference>
<dbReference type="SMR" id="Q18932"/>
<dbReference type="BioGRID" id="39553">
    <property type="interactions" value="4"/>
</dbReference>
<dbReference type="DIP" id="DIP-25432N"/>
<dbReference type="FunCoup" id="Q18932">
    <property type="interactions" value="181"/>
</dbReference>
<dbReference type="IntAct" id="Q18932">
    <property type="interactions" value="1"/>
</dbReference>
<dbReference type="STRING" id="6239.D1022.8.1"/>
<dbReference type="GlyCosmos" id="Q18932">
    <property type="glycosylation" value="1 site, No reported glycans"/>
</dbReference>
<dbReference type="iPTMnet" id="Q18932"/>
<dbReference type="PaxDb" id="6239-D1022.8"/>
<dbReference type="EnsemblMetazoa" id="D1022.8.1">
    <property type="protein sequence ID" value="D1022.8.1"/>
    <property type="gene ID" value="WBGene00000280"/>
</dbReference>
<dbReference type="GeneID" id="174218"/>
<dbReference type="KEGG" id="cel:CELE_D1022.8"/>
<dbReference type="UCSC" id="D1022.8">
    <property type="organism name" value="c. elegans"/>
</dbReference>
<dbReference type="AGR" id="WB:WBGene00000280"/>
<dbReference type="CTD" id="174218"/>
<dbReference type="WormBase" id="D1022.8">
    <property type="protein sequence ID" value="CE31777"/>
    <property type="gene ID" value="WBGene00000280"/>
    <property type="gene designation" value="cah-2"/>
</dbReference>
<dbReference type="eggNOG" id="KOG0382">
    <property type="taxonomic scope" value="Eukaryota"/>
</dbReference>
<dbReference type="HOGENOM" id="CLU_039326_7_1_1"/>
<dbReference type="InParanoid" id="Q18932"/>
<dbReference type="OMA" id="HYTECSV"/>
<dbReference type="OrthoDB" id="5978072at2759"/>
<dbReference type="PhylomeDB" id="Q18932"/>
<dbReference type="PRO" id="PR:Q18932"/>
<dbReference type="Proteomes" id="UP000001940">
    <property type="component" value="Chromosome II"/>
</dbReference>
<dbReference type="Bgee" id="WBGene00000280">
    <property type="expression patterns" value="Expressed in pharyngeal muscle cell (C elegans) and 3 other cell types or tissues"/>
</dbReference>
<dbReference type="GO" id="GO:0005576">
    <property type="term" value="C:extracellular region"/>
    <property type="evidence" value="ECO:0007669"/>
    <property type="project" value="UniProtKB-SubCell"/>
</dbReference>
<dbReference type="GO" id="GO:0004089">
    <property type="term" value="F:carbonate dehydratase activity"/>
    <property type="evidence" value="ECO:0007669"/>
    <property type="project" value="InterPro"/>
</dbReference>
<dbReference type="GO" id="GO:0016836">
    <property type="term" value="F:hydro-lyase activity"/>
    <property type="evidence" value="ECO:0000318"/>
    <property type="project" value="GO_Central"/>
</dbReference>
<dbReference type="GO" id="GO:0008270">
    <property type="term" value="F:zinc ion binding"/>
    <property type="evidence" value="ECO:0007669"/>
    <property type="project" value="InterPro"/>
</dbReference>
<dbReference type="CDD" id="cd03121">
    <property type="entry name" value="alpha_CARP_X_XI_like"/>
    <property type="match status" value="1"/>
</dbReference>
<dbReference type="Gene3D" id="3.10.200.10">
    <property type="entry name" value="Alpha carbonic anhydrase"/>
    <property type="match status" value="1"/>
</dbReference>
<dbReference type="InterPro" id="IPR041878">
    <property type="entry name" value="Alpha_CARP_X/XI"/>
</dbReference>
<dbReference type="InterPro" id="IPR001148">
    <property type="entry name" value="CA_dom"/>
</dbReference>
<dbReference type="InterPro" id="IPR036398">
    <property type="entry name" value="CA_dom_sf"/>
</dbReference>
<dbReference type="InterPro" id="IPR023561">
    <property type="entry name" value="Carbonic_anhydrase_a-class"/>
</dbReference>
<dbReference type="PANTHER" id="PTHR18952">
    <property type="entry name" value="CARBONIC ANHYDRASE"/>
    <property type="match status" value="1"/>
</dbReference>
<dbReference type="PANTHER" id="PTHR18952:SF208">
    <property type="entry name" value="CARBONIC ANHYDRASE XA-RELATED"/>
    <property type="match status" value="1"/>
</dbReference>
<dbReference type="Pfam" id="PF00194">
    <property type="entry name" value="Carb_anhydrase"/>
    <property type="match status" value="1"/>
</dbReference>
<dbReference type="SMART" id="SM01057">
    <property type="entry name" value="Carb_anhydrase"/>
    <property type="match status" value="1"/>
</dbReference>
<dbReference type="SUPFAM" id="SSF51069">
    <property type="entry name" value="Carbonic anhydrase"/>
    <property type="match status" value="1"/>
</dbReference>
<dbReference type="PROSITE" id="PS51144">
    <property type="entry name" value="ALPHA_CA_2"/>
    <property type="match status" value="1"/>
</dbReference>
<comment type="subcellular location">
    <subcellularLocation>
        <location evidence="5">Secreted</location>
    </subcellularLocation>
</comment>
<comment type="similarity">
    <text evidence="5">Belongs to the alpha-carbonic anhydrase family.</text>
</comment>
<comment type="caution">
    <text evidence="5">Has lost two of the three potential zinc-binding residues and therefore may not be active.</text>
</comment>
<keyword id="KW-0325">Glycoprotein</keyword>
<keyword id="KW-1185">Reference proteome</keyword>
<keyword id="KW-0964">Secreted</keyword>
<keyword id="KW-0732">Signal</keyword>
<name>CAH2_CAEEL</name>
<sequence>MIPWLLTACIYPCVIGPDFWGLLHGDWRMCTAGQMQSPVNIDPSQLLYDPHLMPINIEGNIVEAVFENTGQLPVVTVKDLPNRPTINITGGPTMPYRYKLHQISVHFGRADEGEKGSEHTVDRVRFPAEIQLLAYNSALYPNFSVAMTSPRGLLAVSVIVDIGKTTSVELRRLTVASQSINYKGQTTNLTDFQPSALLPKTSHYVTYEGSLTFPGCHETVTWVILNNPIYITNDDLQIWNEMQKTETKQPEPSYMTPAYRPLKSLNGRLVRTNINVGSKQSTVSSSCPSNVYVEMGYQANPGRNKRNDSVSRRYVPTSEVFEIDSIRPDDVSKAGSF</sequence>
<proteinExistence type="evidence at protein level"/>
<gene>
    <name type="primary">cah-2</name>
    <name type="ORF">D1022.8</name>
</gene>
<accession>Q18932</accession>
<reference key="1">
    <citation type="journal article" date="1998" name="Science">
        <title>Genome sequence of the nematode C. elegans: a platform for investigating biology.</title>
        <authorList>
            <consortium name="The C. elegans sequencing consortium"/>
        </authorList>
    </citation>
    <scope>NUCLEOTIDE SEQUENCE [LARGE SCALE GENOMIC DNA]</scope>
    <source>
        <strain>Bristol N2</strain>
    </source>
</reference>
<reference key="2">
    <citation type="journal article" date="2007" name="Mol. Cell. Proteomics">
        <title>Proteomics reveals N-linked glycoprotein diversity in Caenorhabditis elegans and suggests an atypical translocation mechanism for integral membrane proteins.</title>
        <authorList>
            <person name="Kaji H."/>
            <person name="Kamiie J."/>
            <person name="Kawakami H."/>
            <person name="Kido K."/>
            <person name="Yamauchi Y."/>
            <person name="Shinkawa T."/>
            <person name="Taoka M."/>
            <person name="Takahashi N."/>
            <person name="Isobe T."/>
        </authorList>
    </citation>
    <scope>GLYCOSYLATION [LARGE SCALE ANALYSIS] AT ASN-188</scope>
    <scope>IDENTIFICATION BY MASS SPECTROMETRY</scope>
    <source>
        <strain>Bristol N2</strain>
    </source>
</reference>